<geneLocation type="chloroplast"/>
<gene>
    <name evidence="1" type="primary">psbN</name>
</gene>
<evidence type="ECO:0000255" key="1">
    <source>
        <dbReference type="HAMAP-Rule" id="MF_00293"/>
    </source>
</evidence>
<name>PSBN_ILLOL</name>
<organism>
    <name type="scientific">Illicium oligandrum</name>
    <name type="common">Star anise</name>
    <dbReference type="NCBI Taxonomy" id="145286"/>
    <lineage>
        <taxon>Eukaryota</taxon>
        <taxon>Viridiplantae</taxon>
        <taxon>Streptophyta</taxon>
        <taxon>Embryophyta</taxon>
        <taxon>Tracheophyta</taxon>
        <taxon>Spermatophyta</taxon>
        <taxon>Magnoliopsida</taxon>
        <taxon>Austrobaileyales</taxon>
        <taxon>Schisandraceae</taxon>
        <taxon>Illicium</taxon>
    </lineage>
</organism>
<sequence length="43" mass="4636">METATLVAISISGSLVSFTGYALYTAFGQPSQQLRDPFEEHGD</sequence>
<feature type="chain" id="PRO_0000362196" description="Protein PsbN">
    <location>
        <begin position="1"/>
        <end position="43"/>
    </location>
</feature>
<feature type="transmembrane region" description="Helical" evidence="1">
    <location>
        <begin position="5"/>
        <end position="27"/>
    </location>
</feature>
<proteinExistence type="inferred from homology"/>
<accession>A6MMX2</accession>
<reference key="1">
    <citation type="journal article" date="2007" name="Mol. Phylogenet. Evol.">
        <title>Phylogenetic and evolutionary implications of complete chloroplast genome sequences of four early-diverging angiosperms: Buxus (Buxaceae), Chloranthus (Chloranthaceae), Dioscorea (Dioscoreaceae), and Illicium (Schisandraceae).</title>
        <authorList>
            <person name="Hansen D.R."/>
            <person name="Dastidar S.G."/>
            <person name="Cai Z."/>
            <person name="Penaflor C."/>
            <person name="Kuehl J.V."/>
            <person name="Boore J.L."/>
            <person name="Jansen R.K."/>
        </authorList>
    </citation>
    <scope>NUCLEOTIDE SEQUENCE [LARGE SCALE GENOMIC DNA]</scope>
</reference>
<comment type="function">
    <text evidence="1">May play a role in photosystem I and II biogenesis.</text>
</comment>
<comment type="subcellular location">
    <subcellularLocation>
        <location evidence="1">Plastid</location>
        <location evidence="1">Chloroplast thylakoid membrane</location>
        <topology evidence="1">Single-pass membrane protein</topology>
    </subcellularLocation>
</comment>
<comment type="similarity">
    <text evidence="1">Belongs to the PsbN family.</text>
</comment>
<comment type="caution">
    <text evidence="1">Originally thought to be a component of PSII; based on experiments in Synechocystis, N.tabacum and barley, and its absence from PSII in T.elongatus and T.vulcanus, this is probably not true.</text>
</comment>
<protein>
    <recommendedName>
        <fullName evidence="1">Protein PsbN</fullName>
    </recommendedName>
</protein>
<keyword id="KW-0150">Chloroplast</keyword>
<keyword id="KW-0472">Membrane</keyword>
<keyword id="KW-0934">Plastid</keyword>
<keyword id="KW-0793">Thylakoid</keyword>
<keyword id="KW-0812">Transmembrane</keyword>
<keyword id="KW-1133">Transmembrane helix</keyword>
<dbReference type="EMBL" id="EF380354">
    <property type="protein sequence ID" value="ABQ52546.1"/>
    <property type="molecule type" value="Genomic_DNA"/>
</dbReference>
<dbReference type="RefSeq" id="YP_001294298.1">
    <property type="nucleotide sequence ID" value="NC_009600.1"/>
</dbReference>
<dbReference type="SMR" id="A6MMX2"/>
<dbReference type="GeneID" id="5236766"/>
<dbReference type="GO" id="GO:0009535">
    <property type="term" value="C:chloroplast thylakoid membrane"/>
    <property type="evidence" value="ECO:0007669"/>
    <property type="project" value="UniProtKB-SubCell"/>
</dbReference>
<dbReference type="GO" id="GO:0015979">
    <property type="term" value="P:photosynthesis"/>
    <property type="evidence" value="ECO:0007669"/>
    <property type="project" value="InterPro"/>
</dbReference>
<dbReference type="HAMAP" id="MF_00293">
    <property type="entry name" value="PSII_PsbN"/>
    <property type="match status" value="1"/>
</dbReference>
<dbReference type="InterPro" id="IPR003398">
    <property type="entry name" value="PSII_PsbN"/>
</dbReference>
<dbReference type="PANTHER" id="PTHR35326">
    <property type="entry name" value="PROTEIN PSBN"/>
    <property type="match status" value="1"/>
</dbReference>
<dbReference type="PANTHER" id="PTHR35326:SF3">
    <property type="entry name" value="PROTEIN PSBN"/>
    <property type="match status" value="1"/>
</dbReference>
<dbReference type="Pfam" id="PF02468">
    <property type="entry name" value="PsbN"/>
    <property type="match status" value="1"/>
</dbReference>